<accession>Q8D2N9</accession>
<organism>
    <name type="scientific">Wigglesworthia glossinidia brevipalpis</name>
    <dbReference type="NCBI Taxonomy" id="36870"/>
    <lineage>
        <taxon>Bacteria</taxon>
        <taxon>Pseudomonadati</taxon>
        <taxon>Pseudomonadota</taxon>
        <taxon>Gammaproteobacteria</taxon>
        <taxon>Enterobacterales</taxon>
        <taxon>Erwiniaceae</taxon>
        <taxon>Wigglesworthia</taxon>
    </lineage>
</organism>
<keyword id="KW-0997">Cell inner membrane</keyword>
<keyword id="KW-1003">Cell membrane</keyword>
<keyword id="KW-0444">Lipid biosynthesis</keyword>
<keyword id="KW-0443">Lipid metabolism</keyword>
<keyword id="KW-0472">Membrane</keyword>
<keyword id="KW-0594">Phospholipid biosynthesis</keyword>
<keyword id="KW-1208">Phospholipid metabolism</keyword>
<keyword id="KW-1185">Reference proteome</keyword>
<keyword id="KW-0808">Transferase</keyword>
<keyword id="KW-0812">Transmembrane</keyword>
<keyword id="KW-1133">Transmembrane helix</keyword>
<protein>
    <recommendedName>
        <fullName evidence="1">CDP-diacylglycerol--glycerol-3-phosphate 3-phosphatidyltransferase</fullName>
        <ecNumber evidence="1">2.7.8.5</ecNumber>
    </recommendedName>
    <alternativeName>
        <fullName evidence="1">Phosphatidylglycerophosphate synthase</fullName>
        <shortName evidence="1">PGP synthase</shortName>
    </alternativeName>
</protein>
<proteinExistence type="inferred from homology"/>
<name>PGSA_WIGBR</name>
<evidence type="ECO:0000255" key="1">
    <source>
        <dbReference type="HAMAP-Rule" id="MF_01437"/>
    </source>
</evidence>
<reference key="1">
    <citation type="journal article" date="2002" name="Nat. Genet.">
        <title>Genome sequence of the endocellular obligate symbiont of tsetse flies, Wigglesworthia glossinidia.</title>
        <authorList>
            <person name="Akman L."/>
            <person name="Yamashita A."/>
            <person name="Watanabe H."/>
            <person name="Oshima K."/>
            <person name="Shiba T."/>
            <person name="Hattori M."/>
            <person name="Aksoy S."/>
        </authorList>
    </citation>
    <scope>NUCLEOTIDE SEQUENCE [LARGE SCALE GENOMIC DNA]</scope>
</reference>
<sequence>MRLNIPTCLTLFRLIIVPFFIIVFYLPFSNASFYSAIIFILAALTDWFDGFLARKLNQTTCFGAFLDPVADKIIVVIGLILIIEYFHSFWITIPSLIMIIREIIISSLREWMAEIGKNNLLSVSLISKLKTSIQMLAIFSLLWKETYIIIIIGILSLYVSSILAFLSMLKYFYIAWRDLFRN</sequence>
<dbReference type="EC" id="2.7.8.5" evidence="1"/>
<dbReference type="EMBL" id="BA000021">
    <property type="protein sequence ID" value="BAC24461.1"/>
    <property type="molecule type" value="Genomic_DNA"/>
</dbReference>
<dbReference type="SMR" id="Q8D2N9"/>
<dbReference type="STRING" id="36870.gene:10368814"/>
<dbReference type="KEGG" id="wbr:pgsA"/>
<dbReference type="eggNOG" id="COG0558">
    <property type="taxonomic scope" value="Bacteria"/>
</dbReference>
<dbReference type="HOGENOM" id="CLU_051314_2_1_6"/>
<dbReference type="OrthoDB" id="9796672at2"/>
<dbReference type="UniPathway" id="UPA00084">
    <property type="reaction ID" value="UER00503"/>
</dbReference>
<dbReference type="Proteomes" id="UP000000562">
    <property type="component" value="Chromosome"/>
</dbReference>
<dbReference type="GO" id="GO:0005886">
    <property type="term" value="C:plasma membrane"/>
    <property type="evidence" value="ECO:0007669"/>
    <property type="project" value="UniProtKB-SubCell"/>
</dbReference>
<dbReference type="GO" id="GO:0008444">
    <property type="term" value="F:CDP-diacylglycerol-glycerol-3-phosphate 3-phosphatidyltransferase activity"/>
    <property type="evidence" value="ECO:0007669"/>
    <property type="project" value="UniProtKB-UniRule"/>
</dbReference>
<dbReference type="GO" id="GO:0006655">
    <property type="term" value="P:phosphatidylglycerol biosynthetic process"/>
    <property type="evidence" value="ECO:0007669"/>
    <property type="project" value="UniProtKB-UniRule"/>
</dbReference>
<dbReference type="Gene3D" id="1.20.120.1760">
    <property type="match status" value="1"/>
</dbReference>
<dbReference type="HAMAP" id="MF_01437">
    <property type="entry name" value="PgsA"/>
    <property type="match status" value="1"/>
</dbReference>
<dbReference type="InterPro" id="IPR050324">
    <property type="entry name" value="CDP-alcohol_PTase-I"/>
</dbReference>
<dbReference type="InterPro" id="IPR000462">
    <property type="entry name" value="CDP-OH_P_trans"/>
</dbReference>
<dbReference type="InterPro" id="IPR043130">
    <property type="entry name" value="CDP-OH_PTrfase_TM_dom"/>
</dbReference>
<dbReference type="InterPro" id="IPR048254">
    <property type="entry name" value="CDP_ALCOHOL_P_TRANSF_CS"/>
</dbReference>
<dbReference type="InterPro" id="IPR023762">
    <property type="entry name" value="PGP_synthase_bac"/>
</dbReference>
<dbReference type="InterPro" id="IPR004570">
    <property type="entry name" value="Phosphatidylglycerol_P_synth"/>
</dbReference>
<dbReference type="NCBIfam" id="TIGR00560">
    <property type="entry name" value="pgsA"/>
    <property type="match status" value="1"/>
</dbReference>
<dbReference type="PANTHER" id="PTHR14269:SF62">
    <property type="entry name" value="CDP-DIACYLGLYCEROL--GLYCEROL-3-PHOSPHATE 3-PHOSPHATIDYLTRANSFERASE 1, CHLOROPLASTIC"/>
    <property type="match status" value="1"/>
</dbReference>
<dbReference type="PANTHER" id="PTHR14269">
    <property type="entry name" value="CDP-DIACYLGLYCEROL--GLYCEROL-3-PHOSPHATE 3-PHOSPHATIDYLTRANSFERASE-RELATED"/>
    <property type="match status" value="1"/>
</dbReference>
<dbReference type="Pfam" id="PF01066">
    <property type="entry name" value="CDP-OH_P_transf"/>
    <property type="match status" value="1"/>
</dbReference>
<dbReference type="PIRSF" id="PIRSF000847">
    <property type="entry name" value="Phos_ph_gly_syn"/>
    <property type="match status" value="1"/>
</dbReference>
<dbReference type="PROSITE" id="PS00379">
    <property type="entry name" value="CDP_ALCOHOL_P_TRANSF"/>
    <property type="match status" value="1"/>
</dbReference>
<feature type="chain" id="PRO_0000239134" description="CDP-diacylglycerol--glycerol-3-phosphate 3-phosphatidyltransferase">
    <location>
        <begin position="1"/>
        <end position="182"/>
    </location>
</feature>
<feature type="topological domain" description="Cytoplasmic" evidence="1">
    <location>
        <begin position="1"/>
        <end position="12"/>
    </location>
</feature>
<feature type="transmembrane region" description="Helical" evidence="1">
    <location>
        <begin position="13"/>
        <end position="37"/>
    </location>
</feature>
<feature type="topological domain" description="Periplasmic" evidence="1">
    <location>
        <begin position="38"/>
        <end position="60"/>
    </location>
</feature>
<feature type="transmembrane region" description="Helical" evidence="1">
    <location>
        <begin position="61"/>
        <end position="81"/>
    </location>
</feature>
<feature type="topological domain" description="Cytoplasmic" evidence="1">
    <location>
        <begin position="82"/>
        <end position="86"/>
    </location>
</feature>
<feature type="transmembrane region" description="Helical" evidence="1">
    <location>
        <begin position="87"/>
        <end position="107"/>
    </location>
</feature>
<feature type="topological domain" description="Periplasmic" evidence="1">
    <location>
        <begin position="108"/>
        <end position="145"/>
    </location>
</feature>
<feature type="transmembrane region" description="Helical" evidence="1">
    <location>
        <begin position="146"/>
        <end position="168"/>
    </location>
</feature>
<feature type="topological domain" description="Cytoplasmic" evidence="1">
    <location>
        <begin position="169"/>
        <end position="181"/>
    </location>
</feature>
<gene>
    <name evidence="1" type="primary">pgsA</name>
    <name type="ordered locus">WIGBR3150</name>
</gene>
<comment type="function">
    <text evidence="1">Catalyzes the conversion of cytidine diphosphate diacylglycerol (CDP-DG) and glycerol 3-phosphate into phosphatidylglycerol. Essential for the synthesis of anionic phospholipids, thereby playing a role in balancing the ratio of zwitterionic and anionic phospholipids, which is thought to be important for normal membrane function.</text>
</comment>
<comment type="catalytic activity">
    <reaction evidence="1">
        <text>a CDP-1,2-diacyl-sn-glycerol + sn-glycerol 3-phosphate = a 1,2-diacyl-sn-glycero-3-phospho-(1'-sn-glycero-3'-phosphate) + CMP + H(+)</text>
        <dbReference type="Rhea" id="RHEA:12593"/>
        <dbReference type="ChEBI" id="CHEBI:15378"/>
        <dbReference type="ChEBI" id="CHEBI:57597"/>
        <dbReference type="ChEBI" id="CHEBI:58332"/>
        <dbReference type="ChEBI" id="CHEBI:60110"/>
        <dbReference type="ChEBI" id="CHEBI:60377"/>
        <dbReference type="EC" id="2.7.8.5"/>
    </reaction>
</comment>
<comment type="pathway">
    <text evidence="1">Phospholipid metabolism; phosphatidylglycerol biosynthesis; phosphatidylglycerol from CDP-diacylglycerol: step 1/2.</text>
</comment>
<comment type="subcellular location">
    <subcellularLocation>
        <location evidence="1">Cell inner membrane</location>
        <topology evidence="1">Multi-pass membrane protein</topology>
    </subcellularLocation>
</comment>
<comment type="similarity">
    <text evidence="1">Belongs to the CDP-alcohol phosphatidyltransferase class-I family.</text>
</comment>